<proteinExistence type="inferred from homology"/>
<keyword id="KW-0963">Cytoplasm</keyword>
<keyword id="KW-0238">DNA-binding</keyword>
<keyword id="KW-1185">Reference proteome</keyword>
<keyword id="KW-0804">Transcription</keyword>
<keyword id="KW-0805">Transcription regulation</keyword>
<accession>Q3SGS9</accession>
<comment type="subcellular location">
    <subcellularLocation>
        <location evidence="1">Cytoplasm</location>
    </subcellularLocation>
</comment>
<comment type="similarity">
    <text evidence="1">Belongs to the TACO1 family.</text>
</comment>
<dbReference type="EMBL" id="CP000116">
    <property type="protein sequence ID" value="AAZ98168.1"/>
    <property type="molecule type" value="Genomic_DNA"/>
</dbReference>
<dbReference type="RefSeq" id="WP_011312727.1">
    <property type="nucleotide sequence ID" value="NC_007404.1"/>
</dbReference>
<dbReference type="SMR" id="Q3SGS9"/>
<dbReference type="STRING" id="292415.Tbd_2215"/>
<dbReference type="KEGG" id="tbd:Tbd_2215"/>
<dbReference type="eggNOG" id="COG0217">
    <property type="taxonomic scope" value="Bacteria"/>
</dbReference>
<dbReference type="HOGENOM" id="CLU_062974_2_2_4"/>
<dbReference type="OrthoDB" id="9781053at2"/>
<dbReference type="Proteomes" id="UP000008291">
    <property type="component" value="Chromosome"/>
</dbReference>
<dbReference type="GO" id="GO:0005829">
    <property type="term" value="C:cytosol"/>
    <property type="evidence" value="ECO:0007669"/>
    <property type="project" value="TreeGrafter"/>
</dbReference>
<dbReference type="GO" id="GO:0003677">
    <property type="term" value="F:DNA binding"/>
    <property type="evidence" value="ECO:0007669"/>
    <property type="project" value="UniProtKB-UniRule"/>
</dbReference>
<dbReference type="GO" id="GO:0006355">
    <property type="term" value="P:regulation of DNA-templated transcription"/>
    <property type="evidence" value="ECO:0007669"/>
    <property type="project" value="UniProtKB-UniRule"/>
</dbReference>
<dbReference type="FunFam" id="1.10.10.200:FF:000001">
    <property type="entry name" value="Probable transcriptional regulatory protein YebC"/>
    <property type="match status" value="1"/>
</dbReference>
<dbReference type="FunFam" id="3.30.70.980:FF:000002">
    <property type="entry name" value="Probable transcriptional regulatory protein YebC"/>
    <property type="match status" value="1"/>
</dbReference>
<dbReference type="Gene3D" id="1.10.10.200">
    <property type="match status" value="1"/>
</dbReference>
<dbReference type="Gene3D" id="3.30.70.980">
    <property type="match status" value="2"/>
</dbReference>
<dbReference type="HAMAP" id="MF_00693">
    <property type="entry name" value="Transcrip_reg_TACO1"/>
    <property type="match status" value="1"/>
</dbReference>
<dbReference type="InterPro" id="IPR017856">
    <property type="entry name" value="Integrase-like_N"/>
</dbReference>
<dbReference type="InterPro" id="IPR048300">
    <property type="entry name" value="TACO1_YebC-like_2nd/3rd_dom"/>
</dbReference>
<dbReference type="InterPro" id="IPR049083">
    <property type="entry name" value="TACO1_YebC_N"/>
</dbReference>
<dbReference type="InterPro" id="IPR002876">
    <property type="entry name" value="Transcrip_reg_TACO1-like"/>
</dbReference>
<dbReference type="InterPro" id="IPR026564">
    <property type="entry name" value="Transcrip_reg_TACO1-like_dom3"/>
</dbReference>
<dbReference type="InterPro" id="IPR029072">
    <property type="entry name" value="YebC-like"/>
</dbReference>
<dbReference type="NCBIfam" id="NF001030">
    <property type="entry name" value="PRK00110.1"/>
    <property type="match status" value="1"/>
</dbReference>
<dbReference type="NCBIfam" id="NF009044">
    <property type="entry name" value="PRK12378.1"/>
    <property type="match status" value="1"/>
</dbReference>
<dbReference type="NCBIfam" id="TIGR01033">
    <property type="entry name" value="YebC/PmpR family DNA-binding transcriptional regulator"/>
    <property type="match status" value="1"/>
</dbReference>
<dbReference type="PANTHER" id="PTHR12532:SF6">
    <property type="entry name" value="TRANSCRIPTIONAL REGULATORY PROTEIN YEBC-RELATED"/>
    <property type="match status" value="1"/>
</dbReference>
<dbReference type="PANTHER" id="PTHR12532">
    <property type="entry name" value="TRANSLATIONAL ACTIVATOR OF CYTOCHROME C OXIDASE 1"/>
    <property type="match status" value="1"/>
</dbReference>
<dbReference type="Pfam" id="PF20772">
    <property type="entry name" value="TACO1_YebC_N"/>
    <property type="match status" value="1"/>
</dbReference>
<dbReference type="Pfam" id="PF01709">
    <property type="entry name" value="Transcrip_reg"/>
    <property type="match status" value="1"/>
</dbReference>
<dbReference type="SUPFAM" id="SSF75625">
    <property type="entry name" value="YebC-like"/>
    <property type="match status" value="1"/>
</dbReference>
<reference key="1">
    <citation type="journal article" date="2006" name="J. Bacteriol.">
        <title>The genome sequence of the obligately chemolithoautotrophic, facultatively anaerobic bacterium Thiobacillus denitrificans.</title>
        <authorList>
            <person name="Beller H.R."/>
            <person name="Chain P.S."/>
            <person name="Letain T.E."/>
            <person name="Chakicherla A."/>
            <person name="Larimer F.W."/>
            <person name="Richardson P.M."/>
            <person name="Coleman M.A."/>
            <person name="Wood A.P."/>
            <person name="Kelly D.P."/>
        </authorList>
    </citation>
    <scope>NUCLEOTIDE SEQUENCE [LARGE SCALE GENOMIC DNA]</scope>
    <source>
        <strain>ATCC 25259 / T1</strain>
    </source>
</reference>
<organism>
    <name type="scientific">Thiobacillus denitrificans (strain ATCC 25259 / T1)</name>
    <dbReference type="NCBI Taxonomy" id="292415"/>
    <lineage>
        <taxon>Bacteria</taxon>
        <taxon>Pseudomonadati</taxon>
        <taxon>Pseudomonadota</taxon>
        <taxon>Betaproteobacteria</taxon>
        <taxon>Nitrosomonadales</taxon>
        <taxon>Thiobacillaceae</taxon>
        <taxon>Thiobacillus</taxon>
    </lineage>
</organism>
<gene>
    <name type="ordered locus">Tbd_2215</name>
</gene>
<name>Y2215_THIDA</name>
<feature type="chain" id="PRO_0000257154" description="Probable transcriptional regulatory protein Tbd_2215">
    <location>
        <begin position="1"/>
        <end position="243"/>
    </location>
</feature>
<evidence type="ECO:0000255" key="1">
    <source>
        <dbReference type="HAMAP-Rule" id="MF_00693"/>
    </source>
</evidence>
<sequence>MAGHSKWANIQHRKGRQDAKRGKIFTKLIKEITVAAKMGGGDPAMNPRLRLAIEKGKAESLPKDNIENAIKRGTGQLEGVNYEEARYEGYGIGGVAVMVDCLTDNKTRTVADVRHAFTKHGGNMGTDGCVAFQFKHVGQIVLEPGASEEAVMEAALDAGADDVIPNDDGSIEVLTSPDPKAFEAVKEALEKAGFKPAVAEITMRPEAETELAGDDAAKMQKILDALESLDDVQEVYTNAVLPD</sequence>
<protein>
    <recommendedName>
        <fullName evidence="1">Probable transcriptional regulatory protein Tbd_2215</fullName>
    </recommendedName>
</protein>